<sequence length="505" mass="55126">MSRSYNDELQYLDKIHKNCWRIRKGFVPNMQVEGVFYVNDPLEKLMFEELRNASRGGAAGGFLPAMKQIGNVAALPGIIHRSIGLPDVHSGYGFAIGNMAAFDMDNPEAVVSPGGVGFDINCGVRLLRTNLDESDVQPVKEQLAQAMFDHIPVGVGSKGVIPMGAKDLEEALEMGVDWSLREGYAWAEDKEHCEEYGRMLQADPSKVSSKAKKRGLPQLGTLGAGNHYAEVQVVDDIYDEYAAKKMGIDHKGQVCVMIHSGSRGLGHQVATDALVAMEKAMKRDKITVNDRQLACARISSAEGQDYLKGMAAAGNYAWVNRSSMTFLTRQAFSKVFNTTPDDLDLHVIYDVSHNIAKVEQHVVDGKEKTLLVHRKGSTRAFPPHHPLIPVDYQLTGQPVLIGGTMGTCSYVLTGTDQGMTETFGTTCHGAGRALSRAKSRRNLDFQDVLDKLADLGIAIRVASPKLVMEEAPESYKNVTDVVNTCHDAGISKKAIKLRPIAVIKG</sequence>
<accession>Q561P3</accession>
<organism>
    <name type="scientific">Xenopus tropicalis</name>
    <name type="common">Western clawed frog</name>
    <name type="synonym">Silurana tropicalis</name>
    <dbReference type="NCBI Taxonomy" id="8364"/>
    <lineage>
        <taxon>Eukaryota</taxon>
        <taxon>Metazoa</taxon>
        <taxon>Chordata</taxon>
        <taxon>Craniata</taxon>
        <taxon>Vertebrata</taxon>
        <taxon>Euteleostomi</taxon>
        <taxon>Amphibia</taxon>
        <taxon>Batrachia</taxon>
        <taxon>Anura</taxon>
        <taxon>Pipoidea</taxon>
        <taxon>Pipidae</taxon>
        <taxon>Xenopodinae</taxon>
        <taxon>Xenopus</taxon>
        <taxon>Silurana</taxon>
    </lineage>
</organism>
<reference key="1">
    <citation type="submission" date="2005-04" db="EMBL/GenBank/DDBJ databases">
        <authorList>
            <consortium name="NIH - Xenopus Gene Collection (XGC) project"/>
        </authorList>
    </citation>
    <scope>NUCLEOTIDE SEQUENCE [LARGE SCALE MRNA]</scope>
    <source>
        <tissue>Embryo</tissue>
    </source>
</reference>
<keyword id="KW-0963">Cytoplasm</keyword>
<keyword id="KW-0342">GTP-binding</keyword>
<keyword id="KW-0436">Ligase</keyword>
<keyword id="KW-0464">Manganese</keyword>
<keyword id="KW-0479">Metal-binding</keyword>
<keyword id="KW-0547">Nucleotide-binding</keyword>
<keyword id="KW-0539">Nucleus</keyword>
<keyword id="KW-1185">Reference proteome</keyword>
<keyword id="KW-0819">tRNA processing</keyword>
<protein>
    <recommendedName>
        <fullName evidence="2">RNA-splicing ligase RtcB homolog</fullName>
        <ecNumber evidence="2">6.5.1.8</ecNumber>
    </recommendedName>
    <alternativeName>
        <fullName evidence="2">3'-phosphate/5'-hydroxy nucleic acid ligase</fullName>
    </alternativeName>
</protein>
<comment type="function">
    <text evidence="2">Catalytic subunit of the tRNA-splicing ligase complex that acts by directly joining spliced tRNA halves to mature-sized tRNAs by incorporating the precursor-derived splice junction phosphate into the mature tRNA as a canonical 3',5'-phosphodiester. May act as an RNA ligase with broad substrate specificity, and may function toward other RNAs.</text>
</comment>
<comment type="catalytic activity">
    <reaction evidence="2">
        <text>a 3'-end 3'-phospho-ribonucleotide-RNA + a 5'-end dephospho-ribonucleoside-RNA + GTP = a ribonucleotidyl-ribonucleotide-RNA + GMP + diphosphate</text>
        <dbReference type="Rhea" id="RHEA:68076"/>
        <dbReference type="Rhea" id="RHEA-COMP:10463"/>
        <dbReference type="Rhea" id="RHEA-COMP:13936"/>
        <dbReference type="Rhea" id="RHEA-COMP:17355"/>
        <dbReference type="ChEBI" id="CHEBI:33019"/>
        <dbReference type="ChEBI" id="CHEBI:37565"/>
        <dbReference type="ChEBI" id="CHEBI:58115"/>
        <dbReference type="ChEBI" id="CHEBI:83062"/>
        <dbReference type="ChEBI" id="CHEBI:138284"/>
        <dbReference type="ChEBI" id="CHEBI:173118"/>
        <dbReference type="EC" id="6.5.1.8"/>
    </reaction>
</comment>
<comment type="catalytic activity">
    <reaction evidence="2">
        <text>a 3'-end 2',3'-cyclophospho-ribonucleotide-RNA + a 5'-end dephospho-ribonucleoside-RNA + GTP + H2O = a ribonucleotidyl-ribonucleotide-RNA + GMP + diphosphate + H(+)</text>
        <dbReference type="Rhea" id="RHEA:68080"/>
        <dbReference type="Rhea" id="RHEA-COMP:10464"/>
        <dbReference type="Rhea" id="RHEA-COMP:13936"/>
        <dbReference type="Rhea" id="RHEA-COMP:17355"/>
        <dbReference type="ChEBI" id="CHEBI:15377"/>
        <dbReference type="ChEBI" id="CHEBI:15378"/>
        <dbReference type="ChEBI" id="CHEBI:33019"/>
        <dbReference type="ChEBI" id="CHEBI:37565"/>
        <dbReference type="ChEBI" id="CHEBI:58115"/>
        <dbReference type="ChEBI" id="CHEBI:83064"/>
        <dbReference type="ChEBI" id="CHEBI:138284"/>
        <dbReference type="ChEBI" id="CHEBI:173118"/>
        <dbReference type="EC" id="6.5.1.8"/>
    </reaction>
</comment>
<comment type="cofactor">
    <cofactor evidence="2">
        <name>Mn(2+)</name>
        <dbReference type="ChEBI" id="CHEBI:29035"/>
    </cofactor>
    <text evidence="2">Binds 2 manganese ions per subunit.</text>
</comment>
<comment type="subunit">
    <text evidence="2">Catalytic component of the tRNA-splicing ligase complex.</text>
</comment>
<comment type="subcellular location">
    <subcellularLocation>
        <location evidence="1">Nucleus</location>
    </subcellularLocation>
    <subcellularLocation>
        <location evidence="2">Cytoplasm</location>
    </subcellularLocation>
</comment>
<comment type="miscellaneous">
    <text evidence="2">Ligation probably proceeds through 3 nucleotidyl transfer steps, with 2',3'-cyclic phosphate termini being hydrolyzed to 3'-P termini in a step that precedes 3'-P activation with GMP. In the first nucleotidyl transfer step, RTCB reacts with GTP to form a covalent RTCB-histidine-GMP intermediate with release of PPi; in the second step, the GMP moiety is transferred to the RNA 3'-P; in the third step, the 5'-OH from the opposite RNA strand attacks the activated 3'-P to form a 3',5'-phosphodiester bond and release GMP.</text>
</comment>
<comment type="similarity">
    <text evidence="2">Belongs to the RtcB family.</text>
</comment>
<name>RTCB_XENTR</name>
<feature type="chain" id="PRO_0000255247" description="RNA-splicing ligase RtcB homolog">
    <location>
        <begin position="1"/>
        <end position="505"/>
    </location>
</feature>
<feature type="active site" description="GMP-histidine intermediate" evidence="2">
    <location>
        <position position="428"/>
    </location>
</feature>
<feature type="binding site" evidence="2">
    <location>
        <position position="119"/>
    </location>
    <ligand>
        <name>Mn(2+)</name>
        <dbReference type="ChEBI" id="CHEBI:29035"/>
        <label>1</label>
    </ligand>
</feature>
<feature type="binding site" evidence="2">
    <location>
        <position position="122"/>
    </location>
    <ligand>
        <name>Mn(2+)</name>
        <dbReference type="ChEBI" id="CHEBI:29035"/>
        <label>1</label>
    </ligand>
</feature>
<feature type="binding site" evidence="2">
    <location>
        <position position="122"/>
    </location>
    <ligand>
        <name>Mn(2+)</name>
        <dbReference type="ChEBI" id="CHEBI:29035"/>
        <label>2</label>
    </ligand>
</feature>
<feature type="binding site" evidence="2">
    <location>
        <begin position="226"/>
        <end position="230"/>
    </location>
    <ligand>
        <name>GMP</name>
        <dbReference type="ChEBI" id="CHEBI:58115"/>
    </ligand>
</feature>
<feature type="binding site" evidence="2">
    <location>
        <position position="227"/>
    </location>
    <ligand>
        <name>Mn(2+)</name>
        <dbReference type="ChEBI" id="CHEBI:29035"/>
        <label>1</label>
    </ligand>
</feature>
<feature type="binding site" evidence="2">
    <location>
        <position position="259"/>
    </location>
    <ligand>
        <name>Mn(2+)</name>
        <dbReference type="ChEBI" id="CHEBI:29035"/>
        <label>2</label>
    </ligand>
</feature>
<feature type="binding site" evidence="2">
    <location>
        <begin position="353"/>
        <end position="354"/>
    </location>
    <ligand>
        <name>GMP</name>
        <dbReference type="ChEBI" id="CHEBI:58115"/>
    </ligand>
</feature>
<feature type="binding site" evidence="2">
    <location>
        <position position="353"/>
    </location>
    <ligand>
        <name>Mn(2+)</name>
        <dbReference type="ChEBI" id="CHEBI:29035"/>
        <label>2</label>
    </ligand>
</feature>
<feature type="binding site" evidence="2">
    <location>
        <begin position="402"/>
        <end position="405"/>
    </location>
    <ligand>
        <name>GMP</name>
        <dbReference type="ChEBI" id="CHEBI:58115"/>
    </ligand>
</feature>
<feature type="binding site" evidence="2">
    <location>
        <position position="409"/>
    </location>
    <ligand>
        <name>GMP</name>
        <dbReference type="ChEBI" id="CHEBI:58115"/>
    </ligand>
</feature>
<feature type="binding site" evidence="2">
    <location>
        <begin position="428"/>
        <end position="431"/>
    </location>
    <ligand>
        <name>GMP</name>
        <dbReference type="ChEBI" id="CHEBI:58115"/>
    </ligand>
</feature>
<feature type="binding site" evidence="2">
    <location>
        <position position="504"/>
    </location>
    <ligand>
        <name>GMP</name>
        <dbReference type="ChEBI" id="CHEBI:58115"/>
    </ligand>
</feature>
<evidence type="ECO:0000250" key="1"/>
<evidence type="ECO:0000255" key="2">
    <source>
        <dbReference type="HAMAP-Rule" id="MF_03144"/>
    </source>
</evidence>
<proteinExistence type="evidence at transcript level"/>
<gene>
    <name evidence="2" type="primary">rtcb</name>
</gene>
<dbReference type="EC" id="6.5.1.8" evidence="2"/>
<dbReference type="EMBL" id="BC093459">
    <property type="protein sequence ID" value="AAH93459.1"/>
    <property type="molecule type" value="mRNA"/>
</dbReference>
<dbReference type="RefSeq" id="NP_001025674.1">
    <property type="nucleotide sequence ID" value="NM_001030503.1"/>
</dbReference>
<dbReference type="SMR" id="Q561P3"/>
<dbReference type="FunCoup" id="Q561P3">
    <property type="interactions" value="2240"/>
</dbReference>
<dbReference type="STRING" id="8364.ENSXETP00000044481"/>
<dbReference type="PaxDb" id="8364-ENSXETP00000025212"/>
<dbReference type="DNASU" id="595066"/>
<dbReference type="GeneID" id="595066"/>
<dbReference type="KEGG" id="xtr:595066"/>
<dbReference type="AGR" id="Xenbase:XB-GENE-974751"/>
<dbReference type="CTD" id="51493"/>
<dbReference type="Xenbase" id="XB-GENE-974751">
    <property type="gene designation" value="rtcb"/>
</dbReference>
<dbReference type="eggNOG" id="KOG3833">
    <property type="taxonomic scope" value="Eukaryota"/>
</dbReference>
<dbReference type="HOGENOM" id="CLU_022279_0_0_1"/>
<dbReference type="InParanoid" id="Q561P3"/>
<dbReference type="OMA" id="QTRGVEC"/>
<dbReference type="OrthoDB" id="10249697at2759"/>
<dbReference type="PhylomeDB" id="Q561P3"/>
<dbReference type="TreeFam" id="TF314404"/>
<dbReference type="Proteomes" id="UP000008143">
    <property type="component" value="Chromosome 3"/>
</dbReference>
<dbReference type="GO" id="GO:0005737">
    <property type="term" value="C:cytoplasm"/>
    <property type="evidence" value="ECO:0000250"/>
    <property type="project" value="UniProtKB"/>
</dbReference>
<dbReference type="GO" id="GO:0005634">
    <property type="term" value="C:nucleus"/>
    <property type="evidence" value="ECO:0000250"/>
    <property type="project" value="UniProtKB"/>
</dbReference>
<dbReference type="GO" id="GO:0072669">
    <property type="term" value="C:tRNA-splicing ligase complex"/>
    <property type="evidence" value="ECO:0000250"/>
    <property type="project" value="UniProtKB"/>
</dbReference>
<dbReference type="GO" id="GO:0005525">
    <property type="term" value="F:GTP binding"/>
    <property type="evidence" value="ECO:0007669"/>
    <property type="project" value="UniProtKB-KW"/>
</dbReference>
<dbReference type="GO" id="GO:0046872">
    <property type="term" value="F:metal ion binding"/>
    <property type="evidence" value="ECO:0007669"/>
    <property type="project" value="UniProtKB-KW"/>
</dbReference>
<dbReference type="GO" id="GO:0170057">
    <property type="term" value="F:RNA ligase (GTP) activity"/>
    <property type="evidence" value="ECO:0000250"/>
    <property type="project" value="UniProtKB"/>
</dbReference>
<dbReference type="GO" id="GO:0006388">
    <property type="term" value="P:tRNA splicing, via endonucleolytic cleavage and ligation"/>
    <property type="evidence" value="ECO:0000250"/>
    <property type="project" value="UniProtKB"/>
</dbReference>
<dbReference type="FunFam" id="3.90.1860.10:FF:000001">
    <property type="entry name" value="tRNA-splicing ligase RtcB homolog"/>
    <property type="match status" value="1"/>
</dbReference>
<dbReference type="Gene3D" id="3.90.1860.10">
    <property type="entry name" value="tRNA-splicing ligase RtcB"/>
    <property type="match status" value="1"/>
</dbReference>
<dbReference type="HAMAP" id="MF_03144">
    <property type="entry name" value="RtcB_euk"/>
    <property type="match status" value="1"/>
</dbReference>
<dbReference type="InterPro" id="IPR001233">
    <property type="entry name" value="RtcB"/>
</dbReference>
<dbReference type="InterPro" id="IPR036025">
    <property type="entry name" value="RtcB-like_sf"/>
</dbReference>
<dbReference type="InterPro" id="IPR027513">
    <property type="entry name" value="RtcB_euk"/>
</dbReference>
<dbReference type="PANTHER" id="PTHR11118">
    <property type="entry name" value="RNA-SPLICING LIGASE RTCB HOMOLOG"/>
    <property type="match status" value="1"/>
</dbReference>
<dbReference type="PANTHER" id="PTHR11118:SF1">
    <property type="entry name" value="RNA-SPLICING LIGASE RTCB HOMOLOG"/>
    <property type="match status" value="1"/>
</dbReference>
<dbReference type="Pfam" id="PF01139">
    <property type="entry name" value="RtcB"/>
    <property type="match status" value="1"/>
</dbReference>
<dbReference type="SUPFAM" id="SSF103365">
    <property type="entry name" value="Hypothetical protein PH1602"/>
    <property type="match status" value="1"/>
</dbReference>
<dbReference type="PROSITE" id="PS01288">
    <property type="entry name" value="UPF0027"/>
    <property type="match status" value="1"/>
</dbReference>